<protein>
    <recommendedName>
        <fullName evidence="1">GTPase Der</fullName>
    </recommendedName>
    <alternativeName>
        <fullName evidence="1">GTP-binding protein EngA</fullName>
    </alternativeName>
</protein>
<keyword id="KW-0342">GTP-binding</keyword>
<keyword id="KW-0547">Nucleotide-binding</keyword>
<keyword id="KW-0677">Repeat</keyword>
<keyword id="KW-0690">Ribosome biogenesis</keyword>
<sequence>MPKPVIAIVGRPNVGKSTIFNRIVGERVSIVEDIPGVTRDRIYSAGEWLNHEFNIIDTGGIDIGDEPFLTQIRQQAEVAIDEADVIIFMTNGRDGVTAADEEVAKILYRSNKPVVLAVNKVDNPEMRSDIYDFYALGFGEPFPISGTHGLGLGDLLDEAAQHFPKIEEDGYDEDTIRFSLIGRPNVGKSSLVNALLGQERVIVSNVAGTTRDAVDTPYSKDGKDYVIIDTAGMRKKGKVYESTEKYSVLRALRAIERSDVVLVVLDGEEGIIEQDKKIAGYAHDSGRAVVIVVNKWDAVKKDEKTMKAFEENIRAHFQFLEYAPIVFLSAKTRKRTQTLIPVIDEVNESHSIRIQTNVLNDVIMDAVAMNPTPTHNGSRLKIFYATQVAVKPPTFVVFVNDPELLHFSYERFLKNRLRESFGFVGTPIHIIARARD</sequence>
<proteinExistence type="inferred from homology"/>
<organism>
    <name type="scientific">Bacillus cereus (strain AH187)</name>
    <dbReference type="NCBI Taxonomy" id="405534"/>
    <lineage>
        <taxon>Bacteria</taxon>
        <taxon>Bacillati</taxon>
        <taxon>Bacillota</taxon>
        <taxon>Bacilli</taxon>
        <taxon>Bacillales</taxon>
        <taxon>Bacillaceae</taxon>
        <taxon>Bacillus</taxon>
        <taxon>Bacillus cereus group</taxon>
    </lineage>
</organism>
<evidence type="ECO:0000255" key="1">
    <source>
        <dbReference type="HAMAP-Rule" id="MF_00195"/>
    </source>
</evidence>
<dbReference type="EMBL" id="CP001177">
    <property type="protein sequence ID" value="ACJ81998.1"/>
    <property type="molecule type" value="Genomic_DNA"/>
</dbReference>
<dbReference type="SMR" id="B7HL14"/>
<dbReference type="KEGG" id="bcr:BCAH187_A1667"/>
<dbReference type="HOGENOM" id="CLU_016077_6_2_9"/>
<dbReference type="Proteomes" id="UP000002214">
    <property type="component" value="Chromosome"/>
</dbReference>
<dbReference type="GO" id="GO:0005525">
    <property type="term" value="F:GTP binding"/>
    <property type="evidence" value="ECO:0007669"/>
    <property type="project" value="UniProtKB-UniRule"/>
</dbReference>
<dbReference type="GO" id="GO:0043022">
    <property type="term" value="F:ribosome binding"/>
    <property type="evidence" value="ECO:0007669"/>
    <property type="project" value="TreeGrafter"/>
</dbReference>
<dbReference type="GO" id="GO:0042254">
    <property type="term" value="P:ribosome biogenesis"/>
    <property type="evidence" value="ECO:0007669"/>
    <property type="project" value="UniProtKB-KW"/>
</dbReference>
<dbReference type="CDD" id="cd01894">
    <property type="entry name" value="EngA1"/>
    <property type="match status" value="1"/>
</dbReference>
<dbReference type="CDD" id="cd01895">
    <property type="entry name" value="EngA2"/>
    <property type="match status" value="1"/>
</dbReference>
<dbReference type="FunFam" id="3.30.300.20:FF:000004">
    <property type="entry name" value="GTPase Der"/>
    <property type="match status" value="1"/>
</dbReference>
<dbReference type="FunFam" id="3.40.50.300:FF:000040">
    <property type="entry name" value="GTPase Der"/>
    <property type="match status" value="1"/>
</dbReference>
<dbReference type="FunFam" id="3.40.50.300:FF:000057">
    <property type="entry name" value="GTPase Der"/>
    <property type="match status" value="1"/>
</dbReference>
<dbReference type="Gene3D" id="3.30.300.20">
    <property type="match status" value="1"/>
</dbReference>
<dbReference type="Gene3D" id="3.40.50.300">
    <property type="entry name" value="P-loop containing nucleotide triphosphate hydrolases"/>
    <property type="match status" value="2"/>
</dbReference>
<dbReference type="HAMAP" id="MF_00195">
    <property type="entry name" value="GTPase_Der"/>
    <property type="match status" value="1"/>
</dbReference>
<dbReference type="InterPro" id="IPR031166">
    <property type="entry name" value="G_ENGA"/>
</dbReference>
<dbReference type="InterPro" id="IPR006073">
    <property type="entry name" value="GTP-bd"/>
</dbReference>
<dbReference type="InterPro" id="IPR016484">
    <property type="entry name" value="GTPase_Der"/>
</dbReference>
<dbReference type="InterPro" id="IPR032859">
    <property type="entry name" value="KH_dom-like"/>
</dbReference>
<dbReference type="InterPro" id="IPR015946">
    <property type="entry name" value="KH_dom-like_a/b"/>
</dbReference>
<dbReference type="InterPro" id="IPR027417">
    <property type="entry name" value="P-loop_NTPase"/>
</dbReference>
<dbReference type="InterPro" id="IPR005225">
    <property type="entry name" value="Small_GTP-bd"/>
</dbReference>
<dbReference type="NCBIfam" id="TIGR03594">
    <property type="entry name" value="GTPase_EngA"/>
    <property type="match status" value="1"/>
</dbReference>
<dbReference type="NCBIfam" id="TIGR00231">
    <property type="entry name" value="small_GTP"/>
    <property type="match status" value="2"/>
</dbReference>
<dbReference type="PANTHER" id="PTHR43834">
    <property type="entry name" value="GTPASE DER"/>
    <property type="match status" value="1"/>
</dbReference>
<dbReference type="PANTHER" id="PTHR43834:SF6">
    <property type="entry name" value="GTPASE DER"/>
    <property type="match status" value="1"/>
</dbReference>
<dbReference type="Pfam" id="PF14714">
    <property type="entry name" value="KH_dom-like"/>
    <property type="match status" value="1"/>
</dbReference>
<dbReference type="Pfam" id="PF01926">
    <property type="entry name" value="MMR_HSR1"/>
    <property type="match status" value="2"/>
</dbReference>
<dbReference type="PIRSF" id="PIRSF006485">
    <property type="entry name" value="GTP-binding_EngA"/>
    <property type="match status" value="1"/>
</dbReference>
<dbReference type="PRINTS" id="PR00326">
    <property type="entry name" value="GTP1OBG"/>
</dbReference>
<dbReference type="SUPFAM" id="SSF52540">
    <property type="entry name" value="P-loop containing nucleoside triphosphate hydrolases"/>
    <property type="match status" value="2"/>
</dbReference>
<dbReference type="PROSITE" id="PS51712">
    <property type="entry name" value="G_ENGA"/>
    <property type="match status" value="2"/>
</dbReference>
<accession>B7HL14</accession>
<name>DER_BACC7</name>
<feature type="chain" id="PRO_1000118638" description="GTPase Der">
    <location>
        <begin position="1"/>
        <end position="436"/>
    </location>
</feature>
<feature type="domain" description="EngA-type G 1">
    <location>
        <begin position="4"/>
        <end position="167"/>
    </location>
</feature>
<feature type="domain" description="EngA-type G 2">
    <location>
        <begin position="176"/>
        <end position="351"/>
    </location>
</feature>
<feature type="domain" description="KH-like" evidence="1">
    <location>
        <begin position="352"/>
        <end position="436"/>
    </location>
</feature>
<feature type="binding site" evidence="1">
    <location>
        <begin position="10"/>
        <end position="17"/>
    </location>
    <ligand>
        <name>GTP</name>
        <dbReference type="ChEBI" id="CHEBI:37565"/>
        <label>1</label>
    </ligand>
</feature>
<feature type="binding site" evidence="1">
    <location>
        <begin position="57"/>
        <end position="61"/>
    </location>
    <ligand>
        <name>GTP</name>
        <dbReference type="ChEBI" id="CHEBI:37565"/>
        <label>1</label>
    </ligand>
</feature>
<feature type="binding site" evidence="1">
    <location>
        <begin position="119"/>
        <end position="122"/>
    </location>
    <ligand>
        <name>GTP</name>
        <dbReference type="ChEBI" id="CHEBI:37565"/>
        <label>1</label>
    </ligand>
</feature>
<feature type="binding site" evidence="1">
    <location>
        <begin position="182"/>
        <end position="189"/>
    </location>
    <ligand>
        <name>GTP</name>
        <dbReference type="ChEBI" id="CHEBI:37565"/>
        <label>2</label>
    </ligand>
</feature>
<feature type="binding site" evidence="1">
    <location>
        <begin position="229"/>
        <end position="233"/>
    </location>
    <ligand>
        <name>GTP</name>
        <dbReference type="ChEBI" id="CHEBI:37565"/>
        <label>2</label>
    </ligand>
</feature>
<feature type="binding site" evidence="1">
    <location>
        <begin position="294"/>
        <end position="297"/>
    </location>
    <ligand>
        <name>GTP</name>
        <dbReference type="ChEBI" id="CHEBI:37565"/>
        <label>2</label>
    </ligand>
</feature>
<gene>
    <name evidence="1" type="primary">der</name>
    <name type="synonym">engA</name>
    <name type="ordered locus">BCAH187_A1667</name>
</gene>
<comment type="function">
    <text evidence="1">GTPase that plays an essential role in the late steps of ribosome biogenesis.</text>
</comment>
<comment type="subunit">
    <text evidence="1">Associates with the 50S ribosomal subunit.</text>
</comment>
<comment type="similarity">
    <text evidence="1">Belongs to the TRAFAC class TrmE-Era-EngA-EngB-Septin-like GTPase superfamily. EngA (Der) GTPase family.</text>
</comment>
<reference key="1">
    <citation type="submission" date="2008-10" db="EMBL/GenBank/DDBJ databases">
        <title>Genome sequence of Bacillus cereus AH187.</title>
        <authorList>
            <person name="Dodson R.J."/>
            <person name="Durkin A.S."/>
            <person name="Rosovitz M.J."/>
            <person name="Rasko D.A."/>
            <person name="Kolsto A.B."/>
            <person name="Okstad O.A."/>
            <person name="Ravel J."/>
            <person name="Sutton G."/>
        </authorList>
    </citation>
    <scope>NUCLEOTIDE SEQUENCE [LARGE SCALE GENOMIC DNA]</scope>
    <source>
        <strain>AH187</strain>
    </source>
</reference>